<organism>
    <name type="scientific">Haemophilus influenzae (strain PittEE)</name>
    <dbReference type="NCBI Taxonomy" id="374930"/>
    <lineage>
        <taxon>Bacteria</taxon>
        <taxon>Pseudomonadati</taxon>
        <taxon>Pseudomonadota</taxon>
        <taxon>Gammaproteobacteria</taxon>
        <taxon>Pasteurellales</taxon>
        <taxon>Pasteurellaceae</taxon>
        <taxon>Haemophilus</taxon>
    </lineage>
</organism>
<keyword id="KW-0067">ATP-binding</keyword>
<keyword id="KW-0173">Coenzyme A biosynthesis</keyword>
<keyword id="KW-0963">Cytoplasm</keyword>
<keyword id="KW-0460">Magnesium</keyword>
<keyword id="KW-0547">Nucleotide-binding</keyword>
<keyword id="KW-0548">Nucleotidyltransferase</keyword>
<keyword id="KW-0808">Transferase</keyword>
<reference key="1">
    <citation type="journal article" date="2007" name="Genome Biol.">
        <title>Characterization and modeling of the Haemophilus influenzae core and supragenomes based on the complete genomic sequences of Rd and 12 clinical nontypeable strains.</title>
        <authorList>
            <person name="Hogg J.S."/>
            <person name="Hu F.Z."/>
            <person name="Janto B."/>
            <person name="Boissy R."/>
            <person name="Hayes J."/>
            <person name="Keefe R."/>
            <person name="Post J.C."/>
            <person name="Ehrlich G.D."/>
        </authorList>
    </citation>
    <scope>NUCLEOTIDE SEQUENCE [LARGE SCALE GENOMIC DNA]</scope>
    <source>
        <strain>PittEE</strain>
    </source>
</reference>
<proteinExistence type="inferred from homology"/>
<comment type="function">
    <text evidence="1">Reversibly transfers an adenylyl group from ATP to 4'-phosphopantetheine, yielding dephospho-CoA (dPCoA) and pyrophosphate.</text>
</comment>
<comment type="catalytic activity">
    <reaction evidence="1">
        <text>(R)-4'-phosphopantetheine + ATP + H(+) = 3'-dephospho-CoA + diphosphate</text>
        <dbReference type="Rhea" id="RHEA:19801"/>
        <dbReference type="ChEBI" id="CHEBI:15378"/>
        <dbReference type="ChEBI" id="CHEBI:30616"/>
        <dbReference type="ChEBI" id="CHEBI:33019"/>
        <dbReference type="ChEBI" id="CHEBI:57328"/>
        <dbReference type="ChEBI" id="CHEBI:61723"/>
        <dbReference type="EC" id="2.7.7.3"/>
    </reaction>
</comment>
<comment type="cofactor">
    <cofactor evidence="1">
        <name>Mg(2+)</name>
        <dbReference type="ChEBI" id="CHEBI:18420"/>
    </cofactor>
</comment>
<comment type="pathway">
    <text evidence="1">Cofactor biosynthesis; coenzyme A biosynthesis; CoA from (R)-pantothenate: step 4/5.</text>
</comment>
<comment type="subunit">
    <text evidence="1">Homohexamer.</text>
</comment>
<comment type="subcellular location">
    <subcellularLocation>
        <location evidence="1">Cytoplasm</location>
    </subcellularLocation>
</comment>
<comment type="similarity">
    <text evidence="1">Belongs to the bacterial CoaD family.</text>
</comment>
<sequence>MTSVIYPGTFDPITNGHLDIIERSAVIFPRVLVAVANSPSKKTLFSLEERVELVRQSVAHLSNVEVFGFSDLLANVIKQHNISAIIRGVRTTIDFEYELQLAALNRLLTKGVESLFFPPAEKWVFVSSTIVREIYLHGGDVAELVPVPVFNALKAR</sequence>
<accession>A5UE83</accession>
<gene>
    <name evidence="1" type="primary">coaD</name>
    <name type="ordered locus">CGSHiEE_08945</name>
</gene>
<dbReference type="EC" id="2.7.7.3" evidence="1"/>
<dbReference type="EMBL" id="CP000671">
    <property type="protein sequence ID" value="ABQ99084.1"/>
    <property type="molecule type" value="Genomic_DNA"/>
</dbReference>
<dbReference type="SMR" id="A5UE83"/>
<dbReference type="KEGG" id="hip:CGSHiEE_08945"/>
<dbReference type="HOGENOM" id="CLU_100149_0_1_6"/>
<dbReference type="UniPathway" id="UPA00241">
    <property type="reaction ID" value="UER00355"/>
</dbReference>
<dbReference type="GO" id="GO:0005737">
    <property type="term" value="C:cytoplasm"/>
    <property type="evidence" value="ECO:0007669"/>
    <property type="project" value="UniProtKB-SubCell"/>
</dbReference>
<dbReference type="GO" id="GO:0005524">
    <property type="term" value="F:ATP binding"/>
    <property type="evidence" value="ECO:0007669"/>
    <property type="project" value="UniProtKB-KW"/>
</dbReference>
<dbReference type="GO" id="GO:0004595">
    <property type="term" value="F:pantetheine-phosphate adenylyltransferase activity"/>
    <property type="evidence" value="ECO:0007669"/>
    <property type="project" value="UniProtKB-UniRule"/>
</dbReference>
<dbReference type="GO" id="GO:0015937">
    <property type="term" value="P:coenzyme A biosynthetic process"/>
    <property type="evidence" value="ECO:0007669"/>
    <property type="project" value="UniProtKB-UniRule"/>
</dbReference>
<dbReference type="CDD" id="cd02163">
    <property type="entry name" value="PPAT"/>
    <property type="match status" value="1"/>
</dbReference>
<dbReference type="Gene3D" id="3.40.50.620">
    <property type="entry name" value="HUPs"/>
    <property type="match status" value="1"/>
</dbReference>
<dbReference type="HAMAP" id="MF_00151">
    <property type="entry name" value="PPAT_bact"/>
    <property type="match status" value="1"/>
</dbReference>
<dbReference type="InterPro" id="IPR004821">
    <property type="entry name" value="Cyt_trans-like"/>
</dbReference>
<dbReference type="InterPro" id="IPR001980">
    <property type="entry name" value="PPAT"/>
</dbReference>
<dbReference type="InterPro" id="IPR014729">
    <property type="entry name" value="Rossmann-like_a/b/a_fold"/>
</dbReference>
<dbReference type="NCBIfam" id="TIGR01510">
    <property type="entry name" value="coaD_prev_kdtB"/>
    <property type="match status" value="1"/>
</dbReference>
<dbReference type="NCBIfam" id="TIGR00125">
    <property type="entry name" value="cyt_tran_rel"/>
    <property type="match status" value="1"/>
</dbReference>
<dbReference type="PANTHER" id="PTHR21342">
    <property type="entry name" value="PHOSPHOPANTETHEINE ADENYLYLTRANSFERASE"/>
    <property type="match status" value="1"/>
</dbReference>
<dbReference type="PANTHER" id="PTHR21342:SF1">
    <property type="entry name" value="PHOSPHOPANTETHEINE ADENYLYLTRANSFERASE"/>
    <property type="match status" value="1"/>
</dbReference>
<dbReference type="Pfam" id="PF01467">
    <property type="entry name" value="CTP_transf_like"/>
    <property type="match status" value="1"/>
</dbReference>
<dbReference type="PRINTS" id="PR01020">
    <property type="entry name" value="LPSBIOSNTHSS"/>
</dbReference>
<dbReference type="SUPFAM" id="SSF52374">
    <property type="entry name" value="Nucleotidylyl transferase"/>
    <property type="match status" value="1"/>
</dbReference>
<feature type="chain" id="PRO_1000011153" description="Phosphopantetheine adenylyltransferase">
    <location>
        <begin position="1"/>
        <end position="156"/>
    </location>
</feature>
<feature type="binding site" evidence="1">
    <location>
        <begin position="9"/>
        <end position="10"/>
    </location>
    <ligand>
        <name>ATP</name>
        <dbReference type="ChEBI" id="CHEBI:30616"/>
    </ligand>
</feature>
<feature type="binding site" evidence="1">
    <location>
        <position position="9"/>
    </location>
    <ligand>
        <name>substrate</name>
    </ligand>
</feature>
<feature type="binding site" evidence="1">
    <location>
        <position position="17"/>
    </location>
    <ligand>
        <name>ATP</name>
        <dbReference type="ChEBI" id="CHEBI:30616"/>
    </ligand>
</feature>
<feature type="binding site" evidence="1">
    <location>
        <position position="41"/>
    </location>
    <ligand>
        <name>substrate</name>
    </ligand>
</feature>
<feature type="binding site" evidence="1">
    <location>
        <position position="73"/>
    </location>
    <ligand>
        <name>substrate</name>
    </ligand>
</feature>
<feature type="binding site" evidence="1">
    <location>
        <position position="87"/>
    </location>
    <ligand>
        <name>substrate</name>
    </ligand>
</feature>
<feature type="binding site" evidence="1">
    <location>
        <begin position="88"/>
        <end position="90"/>
    </location>
    <ligand>
        <name>ATP</name>
        <dbReference type="ChEBI" id="CHEBI:30616"/>
    </ligand>
</feature>
<feature type="binding site" evidence="1">
    <location>
        <position position="98"/>
    </location>
    <ligand>
        <name>ATP</name>
        <dbReference type="ChEBI" id="CHEBI:30616"/>
    </ligand>
</feature>
<feature type="binding site" evidence="1">
    <location>
        <begin position="123"/>
        <end position="129"/>
    </location>
    <ligand>
        <name>ATP</name>
        <dbReference type="ChEBI" id="CHEBI:30616"/>
    </ligand>
</feature>
<feature type="site" description="Transition state stabilizer" evidence="1">
    <location>
        <position position="17"/>
    </location>
</feature>
<protein>
    <recommendedName>
        <fullName evidence="1">Phosphopantetheine adenylyltransferase</fullName>
        <ecNumber evidence="1">2.7.7.3</ecNumber>
    </recommendedName>
    <alternativeName>
        <fullName evidence="1">Dephospho-CoA pyrophosphorylase</fullName>
    </alternativeName>
    <alternativeName>
        <fullName evidence="1">Pantetheine-phosphate adenylyltransferase</fullName>
        <shortName evidence="1">PPAT</shortName>
    </alternativeName>
</protein>
<name>COAD_HAEIE</name>
<evidence type="ECO:0000255" key="1">
    <source>
        <dbReference type="HAMAP-Rule" id="MF_00151"/>
    </source>
</evidence>